<protein>
    <recommendedName>
        <fullName evidence="1">Transaldolase</fullName>
        <ecNumber evidence="1">2.2.1.2</ecNumber>
    </recommendedName>
</protein>
<reference key="1">
    <citation type="journal article" date="2008" name="J. Bacteriol.">
        <title>Genome sequence of the fish pathogen Renibacterium salmoninarum suggests reductive evolution away from an environmental Arthrobacter ancestor.</title>
        <authorList>
            <person name="Wiens G.D."/>
            <person name="Rockey D.D."/>
            <person name="Wu Z."/>
            <person name="Chang J."/>
            <person name="Levy R."/>
            <person name="Crane S."/>
            <person name="Chen D.S."/>
            <person name="Capri G.R."/>
            <person name="Burnett J.R."/>
            <person name="Sudheesh P.S."/>
            <person name="Schipma M.J."/>
            <person name="Burd H."/>
            <person name="Bhattacharyya A."/>
            <person name="Rhodes L.D."/>
            <person name="Kaul R."/>
            <person name="Strom M.S."/>
        </authorList>
    </citation>
    <scope>NUCLEOTIDE SEQUENCE [LARGE SCALE GENOMIC DNA]</scope>
    <source>
        <strain>ATCC 33209 / DSM 20767 / JCM 11484 / NBRC 15589 / NCIMB 2235</strain>
    </source>
</reference>
<sequence length="374" mass="39876">MTTNTSELSAAGVSIWLDDLSRERLTSGSLQKLIDEKNVVGVTTNPSIFQAAISKGTSYEQQVSELAAQGADVEAAVFQITTQDVANACDFFAGIAVASKGVDGRVSIEVDPRKAWDTQGTIEEAKRLHAAVGKDNVHIKIPATLEGLEAITETLGAGISVNVTLIFSLGRYRAVINAFLLGIEKAKANGHDLSQIHSVASFFVSRVDTEIDKRLDALNTDEAKSLKGKAGVANARLAYQVFEEVFSSERWALLAEAGALPQRPLWASTGVKDPAYPDTLYVTELVAPNVVNTMPEKTLDATADHGVVSGNTISGRYDEANGVLNALEGLGISYNEVVALLEKEGLEKFVASWKELLDHVQDALNSAATKGSES</sequence>
<comment type="function">
    <text evidence="1">Transaldolase is important for the balance of metabolites in the pentose-phosphate pathway.</text>
</comment>
<comment type="catalytic activity">
    <reaction evidence="1">
        <text>D-sedoheptulose 7-phosphate + D-glyceraldehyde 3-phosphate = D-erythrose 4-phosphate + beta-D-fructose 6-phosphate</text>
        <dbReference type="Rhea" id="RHEA:17053"/>
        <dbReference type="ChEBI" id="CHEBI:16897"/>
        <dbReference type="ChEBI" id="CHEBI:57483"/>
        <dbReference type="ChEBI" id="CHEBI:57634"/>
        <dbReference type="ChEBI" id="CHEBI:59776"/>
        <dbReference type="EC" id="2.2.1.2"/>
    </reaction>
</comment>
<comment type="pathway">
    <text evidence="1">Carbohydrate degradation; pentose phosphate pathway; D-glyceraldehyde 3-phosphate and beta-D-fructose 6-phosphate from D-ribose 5-phosphate and D-xylulose 5-phosphate (non-oxidative stage): step 2/3.</text>
</comment>
<comment type="subcellular location">
    <subcellularLocation>
        <location evidence="1">Cytoplasm</location>
    </subcellularLocation>
</comment>
<comment type="similarity">
    <text evidence="1">Belongs to the transaldolase family. Type 2 subfamily.</text>
</comment>
<evidence type="ECO:0000255" key="1">
    <source>
        <dbReference type="HAMAP-Rule" id="MF_00493"/>
    </source>
</evidence>
<keyword id="KW-0963">Cytoplasm</keyword>
<keyword id="KW-0570">Pentose shunt</keyword>
<keyword id="KW-1185">Reference proteome</keyword>
<keyword id="KW-0704">Schiff base</keyword>
<keyword id="KW-0808">Transferase</keyword>
<organism>
    <name type="scientific">Renibacterium salmoninarum (strain ATCC 33209 / DSM 20767 / JCM 11484 / NBRC 15589 / NCIMB 2235)</name>
    <dbReference type="NCBI Taxonomy" id="288705"/>
    <lineage>
        <taxon>Bacteria</taxon>
        <taxon>Bacillati</taxon>
        <taxon>Actinomycetota</taxon>
        <taxon>Actinomycetes</taxon>
        <taxon>Micrococcales</taxon>
        <taxon>Micrococcaceae</taxon>
        <taxon>Renibacterium</taxon>
    </lineage>
</organism>
<accession>A9WT40</accession>
<feature type="chain" id="PRO_1000081403" description="Transaldolase">
    <location>
        <begin position="1"/>
        <end position="374"/>
    </location>
</feature>
<feature type="active site" description="Schiff-base intermediate with substrate" evidence="1">
    <location>
        <position position="140"/>
    </location>
</feature>
<dbReference type="EC" id="2.2.1.2" evidence="1"/>
<dbReference type="EMBL" id="CP000910">
    <property type="protein sequence ID" value="ABY23978.1"/>
    <property type="molecule type" value="Genomic_DNA"/>
</dbReference>
<dbReference type="RefSeq" id="WP_012245643.1">
    <property type="nucleotide sequence ID" value="NC_010168.1"/>
</dbReference>
<dbReference type="SMR" id="A9WT40"/>
<dbReference type="STRING" id="288705.RSal33209_2247"/>
<dbReference type="KEGG" id="rsa:RSal33209_2247"/>
<dbReference type="eggNOG" id="COG0176">
    <property type="taxonomic scope" value="Bacteria"/>
</dbReference>
<dbReference type="HOGENOM" id="CLU_050771_1_0_11"/>
<dbReference type="UniPathway" id="UPA00115">
    <property type="reaction ID" value="UER00414"/>
</dbReference>
<dbReference type="Proteomes" id="UP000002007">
    <property type="component" value="Chromosome"/>
</dbReference>
<dbReference type="GO" id="GO:0005737">
    <property type="term" value="C:cytoplasm"/>
    <property type="evidence" value="ECO:0007669"/>
    <property type="project" value="UniProtKB-SubCell"/>
</dbReference>
<dbReference type="GO" id="GO:0004801">
    <property type="term" value="F:transaldolase activity"/>
    <property type="evidence" value="ECO:0007669"/>
    <property type="project" value="UniProtKB-UniRule"/>
</dbReference>
<dbReference type="GO" id="GO:0005975">
    <property type="term" value="P:carbohydrate metabolic process"/>
    <property type="evidence" value="ECO:0007669"/>
    <property type="project" value="InterPro"/>
</dbReference>
<dbReference type="GO" id="GO:0006098">
    <property type="term" value="P:pentose-phosphate shunt"/>
    <property type="evidence" value="ECO:0007669"/>
    <property type="project" value="UniProtKB-UniRule"/>
</dbReference>
<dbReference type="CDD" id="cd00955">
    <property type="entry name" value="Transaldolase_like"/>
    <property type="match status" value="1"/>
</dbReference>
<dbReference type="Gene3D" id="3.20.20.70">
    <property type="entry name" value="Aldolase class I"/>
    <property type="match status" value="1"/>
</dbReference>
<dbReference type="HAMAP" id="MF_00493">
    <property type="entry name" value="Transaldolase_2"/>
    <property type="match status" value="1"/>
</dbReference>
<dbReference type="InterPro" id="IPR013785">
    <property type="entry name" value="Aldolase_TIM"/>
</dbReference>
<dbReference type="InterPro" id="IPR001585">
    <property type="entry name" value="TAL/FSA"/>
</dbReference>
<dbReference type="InterPro" id="IPR004732">
    <property type="entry name" value="Transaldolase_2"/>
</dbReference>
<dbReference type="InterPro" id="IPR018225">
    <property type="entry name" value="Transaldolase_AS"/>
</dbReference>
<dbReference type="NCBIfam" id="NF002881">
    <property type="entry name" value="PRK03343.1"/>
    <property type="match status" value="1"/>
</dbReference>
<dbReference type="NCBIfam" id="TIGR00876">
    <property type="entry name" value="tal_mycobact"/>
    <property type="match status" value="1"/>
</dbReference>
<dbReference type="PANTHER" id="PTHR10683">
    <property type="entry name" value="TRANSALDOLASE"/>
    <property type="match status" value="1"/>
</dbReference>
<dbReference type="PANTHER" id="PTHR10683:SF31">
    <property type="entry name" value="TRANSALDOLASE"/>
    <property type="match status" value="1"/>
</dbReference>
<dbReference type="Pfam" id="PF00923">
    <property type="entry name" value="TAL_FSA"/>
    <property type="match status" value="1"/>
</dbReference>
<dbReference type="PIRSF" id="PIRSF036915">
    <property type="entry name" value="Trnald_Bac_Plnt"/>
    <property type="match status" value="1"/>
</dbReference>
<dbReference type="SUPFAM" id="SSF51569">
    <property type="entry name" value="Aldolase"/>
    <property type="match status" value="1"/>
</dbReference>
<dbReference type="PROSITE" id="PS01054">
    <property type="entry name" value="TRANSALDOLASE_1"/>
    <property type="match status" value="1"/>
</dbReference>
<gene>
    <name evidence="1" type="primary">tal</name>
    <name type="ordered locus">RSal33209_2247</name>
</gene>
<name>TAL_RENSM</name>
<proteinExistence type="inferred from homology"/>